<organism>
    <name type="scientific">Salmonella arizonae (strain ATCC BAA-731 / CDC346-86 / RSK2980)</name>
    <dbReference type="NCBI Taxonomy" id="41514"/>
    <lineage>
        <taxon>Bacteria</taxon>
        <taxon>Pseudomonadati</taxon>
        <taxon>Pseudomonadota</taxon>
        <taxon>Gammaproteobacteria</taxon>
        <taxon>Enterobacterales</taxon>
        <taxon>Enterobacteriaceae</taxon>
        <taxon>Salmonella</taxon>
    </lineage>
</organism>
<accession>A9ML15</accession>
<protein>
    <recommendedName>
        <fullName evidence="1">Histidinol-phosphate aminotransferase</fullName>
        <ecNumber evidence="1">2.6.1.9</ecNumber>
    </recommendedName>
    <alternativeName>
        <fullName evidence="1">Imidazole acetol-phosphate transaminase</fullName>
    </alternativeName>
</protein>
<dbReference type="EC" id="2.6.1.9" evidence="1"/>
<dbReference type="EMBL" id="CP000880">
    <property type="protein sequence ID" value="ABX20731.1"/>
    <property type="molecule type" value="Genomic_DNA"/>
</dbReference>
<dbReference type="SMR" id="A9ML15"/>
<dbReference type="STRING" id="41514.SARI_00811"/>
<dbReference type="KEGG" id="ses:SARI_00811"/>
<dbReference type="HOGENOM" id="CLU_017584_3_1_6"/>
<dbReference type="UniPathway" id="UPA00031">
    <property type="reaction ID" value="UER00012"/>
</dbReference>
<dbReference type="Proteomes" id="UP000002084">
    <property type="component" value="Chromosome"/>
</dbReference>
<dbReference type="GO" id="GO:0004400">
    <property type="term" value="F:histidinol-phosphate transaminase activity"/>
    <property type="evidence" value="ECO:0007669"/>
    <property type="project" value="UniProtKB-UniRule"/>
</dbReference>
<dbReference type="GO" id="GO:0030170">
    <property type="term" value="F:pyridoxal phosphate binding"/>
    <property type="evidence" value="ECO:0007669"/>
    <property type="project" value="InterPro"/>
</dbReference>
<dbReference type="GO" id="GO:0000105">
    <property type="term" value="P:L-histidine biosynthetic process"/>
    <property type="evidence" value="ECO:0007669"/>
    <property type="project" value="UniProtKB-UniRule"/>
</dbReference>
<dbReference type="CDD" id="cd00609">
    <property type="entry name" value="AAT_like"/>
    <property type="match status" value="1"/>
</dbReference>
<dbReference type="FunFam" id="3.40.640.10:FF:000032">
    <property type="entry name" value="Histidinol-phosphate aminotransferase"/>
    <property type="match status" value="1"/>
</dbReference>
<dbReference type="Gene3D" id="3.90.1150.10">
    <property type="entry name" value="Aspartate Aminotransferase, domain 1"/>
    <property type="match status" value="1"/>
</dbReference>
<dbReference type="Gene3D" id="3.40.640.10">
    <property type="entry name" value="Type I PLP-dependent aspartate aminotransferase-like (Major domain)"/>
    <property type="match status" value="1"/>
</dbReference>
<dbReference type="HAMAP" id="MF_01023">
    <property type="entry name" value="HisC_aminotrans_2"/>
    <property type="match status" value="1"/>
</dbReference>
<dbReference type="InterPro" id="IPR001917">
    <property type="entry name" value="Aminotrans_II_pyridoxalP_BS"/>
</dbReference>
<dbReference type="InterPro" id="IPR004839">
    <property type="entry name" value="Aminotransferase_I/II_large"/>
</dbReference>
<dbReference type="InterPro" id="IPR005861">
    <property type="entry name" value="HisP_aminotrans"/>
</dbReference>
<dbReference type="InterPro" id="IPR015424">
    <property type="entry name" value="PyrdxlP-dep_Trfase"/>
</dbReference>
<dbReference type="InterPro" id="IPR015421">
    <property type="entry name" value="PyrdxlP-dep_Trfase_major"/>
</dbReference>
<dbReference type="InterPro" id="IPR015422">
    <property type="entry name" value="PyrdxlP-dep_Trfase_small"/>
</dbReference>
<dbReference type="NCBIfam" id="TIGR01141">
    <property type="entry name" value="hisC"/>
    <property type="match status" value="1"/>
</dbReference>
<dbReference type="PANTHER" id="PTHR42885:SF2">
    <property type="entry name" value="HISTIDINOL-PHOSPHATE AMINOTRANSFERASE"/>
    <property type="match status" value="1"/>
</dbReference>
<dbReference type="PANTHER" id="PTHR42885">
    <property type="entry name" value="HISTIDINOL-PHOSPHATE AMINOTRANSFERASE-RELATED"/>
    <property type="match status" value="1"/>
</dbReference>
<dbReference type="Pfam" id="PF00155">
    <property type="entry name" value="Aminotran_1_2"/>
    <property type="match status" value="1"/>
</dbReference>
<dbReference type="SUPFAM" id="SSF53383">
    <property type="entry name" value="PLP-dependent transferases"/>
    <property type="match status" value="1"/>
</dbReference>
<dbReference type="PROSITE" id="PS00599">
    <property type="entry name" value="AA_TRANSFER_CLASS_2"/>
    <property type="match status" value="1"/>
</dbReference>
<proteinExistence type="inferred from homology"/>
<gene>
    <name evidence="1" type="primary">hisC</name>
    <name type="ordered locus">SARI_00811</name>
</gene>
<comment type="catalytic activity">
    <reaction evidence="1">
        <text>L-histidinol phosphate + 2-oxoglutarate = 3-(imidazol-4-yl)-2-oxopropyl phosphate + L-glutamate</text>
        <dbReference type="Rhea" id="RHEA:23744"/>
        <dbReference type="ChEBI" id="CHEBI:16810"/>
        <dbReference type="ChEBI" id="CHEBI:29985"/>
        <dbReference type="ChEBI" id="CHEBI:57766"/>
        <dbReference type="ChEBI" id="CHEBI:57980"/>
        <dbReference type="EC" id="2.6.1.9"/>
    </reaction>
</comment>
<comment type="cofactor">
    <cofactor evidence="1">
        <name>pyridoxal 5'-phosphate</name>
        <dbReference type="ChEBI" id="CHEBI:597326"/>
    </cofactor>
</comment>
<comment type="pathway">
    <text evidence="1">Amino-acid biosynthesis; L-histidine biosynthesis; L-histidine from 5-phospho-alpha-D-ribose 1-diphosphate: step 7/9.</text>
</comment>
<comment type="subunit">
    <text evidence="1">Homodimer.</text>
</comment>
<comment type="similarity">
    <text evidence="1">Belongs to the class-II pyridoxal-phosphate-dependent aminotransferase family. Histidinol-phosphate aminotransferase subfamily.</text>
</comment>
<keyword id="KW-0028">Amino-acid biosynthesis</keyword>
<keyword id="KW-0032">Aminotransferase</keyword>
<keyword id="KW-0368">Histidine biosynthesis</keyword>
<keyword id="KW-0663">Pyridoxal phosphate</keyword>
<keyword id="KW-1185">Reference proteome</keyword>
<keyword id="KW-0808">Transferase</keyword>
<reference key="1">
    <citation type="submission" date="2007-11" db="EMBL/GenBank/DDBJ databases">
        <authorList>
            <consortium name="The Salmonella enterica serovar Arizonae Genome Sequencing Project"/>
            <person name="McClelland M."/>
            <person name="Sanderson E.K."/>
            <person name="Porwollik S."/>
            <person name="Spieth J."/>
            <person name="Clifton W.S."/>
            <person name="Fulton R."/>
            <person name="Chunyan W."/>
            <person name="Wollam A."/>
            <person name="Shah N."/>
            <person name="Pepin K."/>
            <person name="Bhonagiri V."/>
            <person name="Nash W."/>
            <person name="Johnson M."/>
            <person name="Thiruvilangam P."/>
            <person name="Wilson R."/>
        </authorList>
    </citation>
    <scope>NUCLEOTIDE SEQUENCE [LARGE SCALE GENOMIC DNA]</scope>
    <source>
        <strain>ATCC BAA-731 / CDC346-86 / RSK2980</strain>
    </source>
</reference>
<feature type="chain" id="PRO_1000084201" description="Histidinol-phosphate aminotransferase">
    <location>
        <begin position="1"/>
        <end position="359"/>
    </location>
</feature>
<feature type="modified residue" description="N6-(pyridoxal phosphate)lysine" evidence="1">
    <location>
        <position position="217"/>
    </location>
</feature>
<evidence type="ECO:0000255" key="1">
    <source>
        <dbReference type="HAMAP-Rule" id="MF_01023"/>
    </source>
</evidence>
<sequence length="359" mass="39820">MSTENTLSVADLARENVRNLIPYQSARRLGGNGDVWLNANEFPTAVEFQLTQQTLNRYPECQPKAVIENYAQYAGVKPEQVLVSRGADEGIELMIRAFCEPGKDAILYCPPTYGMYSVSAETIGVARRTVPTLENWQLDLQGIYDNLDGAKVVFVCSPNNPTGQLINPQDLRTLLELTRGKAMVVADEAYIEFCPQATLAGWLVEYPHLVILRTLSKAFALAGLRCGFTLANEEVINLLLKVIAPYPLSTPVADIAAQALSPRGINAMRERVRLIVQERQHLVNGLQQAACLEHVFDSETNYILARFTASSSVFKSLWDQGIILRDQNKQPSLSGCLRITVGTRQENQRVIDALRAEPV</sequence>
<name>HIS8_SALAR</name>